<protein>
    <recommendedName>
        <fullName evidence="1">Ribulose bisphosphate carboxylase</fullName>
        <shortName evidence="1">RuBisCO</shortName>
        <ecNumber evidence="1">4.1.1.39</ecNumber>
    </recommendedName>
</protein>
<dbReference type="EC" id="4.1.1.39" evidence="1"/>
<dbReference type="EMBL" id="AY155466">
    <property type="protein sequence ID" value="AAN52766.1"/>
    <property type="molecule type" value="Genomic_DNA"/>
</dbReference>
<dbReference type="EMBL" id="AF355197">
    <property type="protein sequence ID" value="AAK39106.1"/>
    <property type="molecule type" value="Genomic_DNA"/>
</dbReference>
<dbReference type="EMBL" id="BX572607">
    <property type="protein sequence ID" value="CAE30081.1"/>
    <property type="molecule type" value="Genomic_DNA"/>
</dbReference>
<dbReference type="RefSeq" id="WP_011160173.1">
    <property type="nucleotide sequence ID" value="NZ_CP116810.1"/>
</dbReference>
<dbReference type="PDB" id="4LF1">
    <property type="method" value="X-ray"/>
    <property type="resolution" value="2.38 A"/>
    <property type="chains" value="A/B/C/D/E/F=1-461"/>
</dbReference>
<dbReference type="PDB" id="4LF2">
    <property type="method" value="X-ray"/>
    <property type="resolution" value="2.38 A"/>
    <property type="chains" value="A/B/C/D/E/F=1-461"/>
</dbReference>
<dbReference type="PDB" id="5HAN">
    <property type="method" value="X-ray"/>
    <property type="resolution" value="2.04 A"/>
    <property type="chains" value="A/B/C/D/E/F/G/H/I/J/K/L=1-461"/>
</dbReference>
<dbReference type="PDB" id="5HAO">
    <property type="method" value="X-ray"/>
    <property type="resolution" value="2.18 A"/>
    <property type="chains" value="A/B/C/D/E/F=1-461"/>
</dbReference>
<dbReference type="PDB" id="5HAT">
    <property type="method" value="X-ray"/>
    <property type="resolution" value="2.00 A"/>
    <property type="chains" value="A/B/C/D/E/F/G/H/I/J/K/L=1-461"/>
</dbReference>
<dbReference type="PDB" id="5HJX">
    <property type="method" value="X-ray"/>
    <property type="resolution" value="1.80 A"/>
    <property type="chains" value="A/B/C/D/E/F=1-461"/>
</dbReference>
<dbReference type="PDB" id="5HJY">
    <property type="method" value="X-ray"/>
    <property type="resolution" value="2.30 A"/>
    <property type="chains" value="A/B/C/D/E/F=1-461"/>
</dbReference>
<dbReference type="PDB" id="5HK4">
    <property type="method" value="X-ray"/>
    <property type="resolution" value="2.15 A"/>
    <property type="chains" value="A/B/C/D/E/F=1-461"/>
</dbReference>
<dbReference type="PDB" id="5HQL">
    <property type="method" value="X-ray"/>
    <property type="resolution" value="2.53 A"/>
    <property type="chains" value="A/B/C/D/E/F=1-461"/>
</dbReference>
<dbReference type="PDB" id="5HQM">
    <property type="method" value="X-ray"/>
    <property type="resolution" value="1.95 A"/>
    <property type="chains" value="A/B=1-456"/>
</dbReference>
<dbReference type="PDB" id="5KOZ">
    <property type="method" value="X-ray"/>
    <property type="resolution" value="2.30 A"/>
    <property type="chains" value="A/B/C/D/E/F/G/H/I/J/K/L=1-461"/>
</dbReference>
<dbReference type="PDBsum" id="4LF1"/>
<dbReference type="PDBsum" id="4LF2"/>
<dbReference type="PDBsum" id="5HAN"/>
<dbReference type="PDBsum" id="5HAO"/>
<dbReference type="PDBsum" id="5HAT"/>
<dbReference type="PDBsum" id="5HJX"/>
<dbReference type="PDBsum" id="5HJY"/>
<dbReference type="PDBsum" id="5HK4"/>
<dbReference type="PDBsum" id="5HQL"/>
<dbReference type="PDBsum" id="5HQM"/>
<dbReference type="PDBsum" id="5KOZ"/>
<dbReference type="SMR" id="Q6N0W9"/>
<dbReference type="STRING" id="258594.RPA4641"/>
<dbReference type="GeneID" id="66895793"/>
<dbReference type="eggNOG" id="COG1850">
    <property type="taxonomic scope" value="Bacteria"/>
</dbReference>
<dbReference type="HOGENOM" id="CLU_031450_3_1_5"/>
<dbReference type="PhylomeDB" id="Q6N0W9"/>
<dbReference type="EvolutionaryTrace" id="Q6N0W9"/>
<dbReference type="GO" id="GO:0000287">
    <property type="term" value="F:magnesium ion binding"/>
    <property type="evidence" value="ECO:0007669"/>
    <property type="project" value="UniProtKB-UniRule"/>
</dbReference>
<dbReference type="GO" id="GO:0004497">
    <property type="term" value="F:monooxygenase activity"/>
    <property type="evidence" value="ECO:0007669"/>
    <property type="project" value="UniProtKB-KW"/>
</dbReference>
<dbReference type="GO" id="GO:0016984">
    <property type="term" value="F:ribulose-bisphosphate carboxylase activity"/>
    <property type="evidence" value="ECO:0007669"/>
    <property type="project" value="UniProtKB-UniRule"/>
</dbReference>
<dbReference type="GO" id="GO:0019253">
    <property type="term" value="P:reductive pentose-phosphate cycle"/>
    <property type="evidence" value="ECO:0007669"/>
    <property type="project" value="UniProtKB-KW"/>
</dbReference>
<dbReference type="CDD" id="cd08211">
    <property type="entry name" value="RuBisCO_large_II"/>
    <property type="match status" value="1"/>
</dbReference>
<dbReference type="Gene3D" id="3.20.20.110">
    <property type="entry name" value="Ribulose bisphosphate carboxylase, large subunit, C-terminal domain"/>
    <property type="match status" value="1"/>
</dbReference>
<dbReference type="Gene3D" id="3.30.70.150">
    <property type="entry name" value="RuBisCO large subunit, N-terminal domain"/>
    <property type="match status" value="1"/>
</dbReference>
<dbReference type="HAMAP" id="MF_01339">
    <property type="entry name" value="RuBisCO_L_type2"/>
    <property type="match status" value="1"/>
</dbReference>
<dbReference type="InterPro" id="IPR033966">
    <property type="entry name" value="RuBisCO"/>
</dbReference>
<dbReference type="InterPro" id="IPR020878">
    <property type="entry name" value="RuBisCo_large_chain_AS"/>
</dbReference>
<dbReference type="InterPro" id="IPR000685">
    <property type="entry name" value="RuBisCO_lsu_C"/>
</dbReference>
<dbReference type="InterPro" id="IPR036376">
    <property type="entry name" value="RuBisCO_lsu_C_sf"/>
</dbReference>
<dbReference type="InterPro" id="IPR017443">
    <property type="entry name" value="RuBisCO_lsu_fd_N"/>
</dbReference>
<dbReference type="InterPro" id="IPR036422">
    <property type="entry name" value="RuBisCO_lsu_N_sf"/>
</dbReference>
<dbReference type="InterPro" id="IPR020871">
    <property type="entry name" value="RuBisCO_lsuII"/>
</dbReference>
<dbReference type="NCBIfam" id="NF010002">
    <property type="entry name" value="PRK13475.1"/>
    <property type="match status" value="1"/>
</dbReference>
<dbReference type="PANTHER" id="PTHR42704">
    <property type="entry name" value="RIBULOSE BISPHOSPHATE CARBOXYLASE"/>
    <property type="match status" value="1"/>
</dbReference>
<dbReference type="PANTHER" id="PTHR42704:SF17">
    <property type="entry name" value="RIBULOSE BISPHOSPHATE CARBOXYLASE LARGE CHAIN"/>
    <property type="match status" value="1"/>
</dbReference>
<dbReference type="Pfam" id="PF00016">
    <property type="entry name" value="RuBisCO_large"/>
    <property type="match status" value="1"/>
</dbReference>
<dbReference type="Pfam" id="PF02788">
    <property type="entry name" value="RuBisCO_large_N"/>
    <property type="match status" value="1"/>
</dbReference>
<dbReference type="SFLD" id="SFLDS00014">
    <property type="entry name" value="RuBisCO"/>
    <property type="match status" value="1"/>
</dbReference>
<dbReference type="SFLD" id="SFLDG00301">
    <property type="entry name" value="RuBisCO-like_proteins"/>
    <property type="match status" value="1"/>
</dbReference>
<dbReference type="SUPFAM" id="SSF51649">
    <property type="entry name" value="RuBisCo, C-terminal domain"/>
    <property type="match status" value="1"/>
</dbReference>
<dbReference type="SUPFAM" id="SSF54966">
    <property type="entry name" value="RuBisCO, large subunit, small (N-terminal) domain"/>
    <property type="match status" value="1"/>
</dbReference>
<dbReference type="PROSITE" id="PS00157">
    <property type="entry name" value="RUBISCO_LARGE"/>
    <property type="match status" value="1"/>
</dbReference>
<keyword id="KW-0002">3D-structure</keyword>
<keyword id="KW-0113">Calvin cycle</keyword>
<keyword id="KW-0120">Carbon dioxide fixation</keyword>
<keyword id="KW-0456">Lyase</keyword>
<keyword id="KW-0460">Magnesium</keyword>
<keyword id="KW-0479">Metal-binding</keyword>
<keyword id="KW-0503">Monooxygenase</keyword>
<keyword id="KW-0560">Oxidoreductase</keyword>
<keyword id="KW-0602">Photosynthesis</keyword>
<feature type="chain" id="PRO_0000062665" description="Ribulose bisphosphate carboxylase">
    <location>
        <begin position="1"/>
        <end position="461"/>
    </location>
</feature>
<feature type="active site" description="Proton acceptor" evidence="1">
    <location>
        <position position="167"/>
    </location>
</feature>
<feature type="active site" description="Proton acceptor" evidence="1">
    <location>
        <position position="288"/>
    </location>
</feature>
<feature type="binding site" description="in homodimeric partner" evidence="1">
    <location>
        <position position="112"/>
    </location>
    <ligand>
        <name>substrate</name>
    </ligand>
</feature>
<feature type="binding site" evidence="1">
    <location>
        <position position="169"/>
    </location>
    <ligand>
        <name>substrate</name>
    </ligand>
</feature>
<feature type="binding site" description="via carbamate group" evidence="1">
    <location>
        <position position="192"/>
    </location>
    <ligand>
        <name>Mg(2+)</name>
        <dbReference type="ChEBI" id="CHEBI:18420"/>
    </ligand>
</feature>
<feature type="binding site" evidence="1">
    <location>
        <position position="194"/>
    </location>
    <ligand>
        <name>Mg(2+)</name>
        <dbReference type="ChEBI" id="CHEBI:18420"/>
    </ligand>
</feature>
<feature type="binding site" evidence="1">
    <location>
        <position position="195"/>
    </location>
    <ligand>
        <name>Mg(2+)</name>
        <dbReference type="ChEBI" id="CHEBI:18420"/>
    </ligand>
</feature>
<feature type="binding site" evidence="1">
    <location>
        <position position="289"/>
    </location>
    <ligand>
        <name>substrate</name>
    </ligand>
</feature>
<feature type="binding site" evidence="1">
    <location>
        <position position="322"/>
    </location>
    <ligand>
        <name>substrate</name>
    </ligand>
</feature>
<feature type="binding site" evidence="1">
    <location>
        <position position="369"/>
    </location>
    <ligand>
        <name>substrate</name>
    </ligand>
</feature>
<feature type="site" description="Transition state stabilizer" evidence="1">
    <location>
        <position position="330"/>
    </location>
</feature>
<feature type="modified residue" description="N6-carboxylysine" evidence="1">
    <location>
        <position position="192"/>
    </location>
</feature>
<feature type="sequence conflict" description="In Ref. 1; AAN52766." evidence="2" ref="1">
    <original>V</original>
    <variation>I</variation>
    <location>
        <position position="75"/>
    </location>
</feature>
<feature type="sequence conflict" description="In Ref. 1; AAN52766." evidence="2" ref="1">
    <original>NS</original>
    <variation>KG</variation>
    <location>
        <begin position="79"/>
        <end position="80"/>
    </location>
</feature>
<feature type="sequence conflict" description="In Ref. 1; AAN52766." evidence="2" ref="1">
    <original>K</original>
    <variation>R</variation>
    <location>
        <position position="145"/>
    </location>
</feature>
<feature type="sequence conflict" description="In Ref. 1; AAN52766." evidence="2" ref="1">
    <original>I</original>
    <variation>V</variation>
    <location>
        <position position="156"/>
    </location>
</feature>
<feature type="sequence conflict" description="In Ref. 1; AAN52766." evidence="2" ref="1">
    <original>A</original>
    <variation>S</variation>
    <location>
        <position position="348"/>
    </location>
</feature>
<feature type="sequence conflict" description="In Ref. 1; AAN52766." evidence="2" ref="1">
    <original>M</original>
    <variation>L</variation>
    <location>
        <position position="361"/>
    </location>
</feature>
<feature type="sequence conflict" description="In Ref. 2; AAK39106." evidence="2" ref="2">
    <original>PQ</original>
    <variation>AH</variation>
    <location>
        <begin position="442"/>
        <end position="443"/>
    </location>
</feature>
<feature type="helix" evidence="3">
    <location>
        <begin position="4"/>
        <end position="7"/>
    </location>
</feature>
<feature type="helix" evidence="3">
    <location>
        <begin position="14"/>
        <end position="20"/>
    </location>
</feature>
<feature type="strand" evidence="3">
    <location>
        <begin position="23"/>
        <end position="32"/>
    </location>
</feature>
<feature type="helix" evidence="3">
    <location>
        <begin position="39"/>
        <end position="48"/>
    </location>
</feature>
<feature type="turn" evidence="3">
    <location>
        <begin position="49"/>
        <end position="52"/>
    </location>
</feature>
<feature type="helix" evidence="3">
    <location>
        <begin position="63"/>
        <end position="67"/>
    </location>
</feature>
<feature type="strand" evidence="3">
    <location>
        <begin position="71"/>
        <end position="76"/>
    </location>
</feature>
<feature type="helix" evidence="3">
    <location>
        <begin position="77"/>
        <end position="79"/>
    </location>
</feature>
<feature type="strand" evidence="3">
    <location>
        <begin position="81"/>
        <end position="87"/>
    </location>
</feature>
<feature type="helix" evidence="3">
    <location>
        <begin position="88"/>
        <end position="90"/>
    </location>
</feature>
<feature type="turn" evidence="3">
    <location>
        <begin position="95"/>
        <end position="97"/>
    </location>
</feature>
<feature type="helix" evidence="3">
    <location>
        <begin position="102"/>
        <end position="109"/>
    </location>
</feature>
<feature type="helix" evidence="3">
    <location>
        <begin position="112"/>
        <end position="114"/>
    </location>
</feature>
<feature type="strand" evidence="3">
    <location>
        <begin position="119"/>
        <end position="128"/>
    </location>
</feature>
<feature type="helix" evidence="3">
    <location>
        <begin position="131"/>
        <end position="134"/>
    </location>
</feature>
<feature type="helix" evidence="3">
    <location>
        <begin position="144"/>
        <end position="151"/>
    </location>
</feature>
<feature type="strand" evidence="3">
    <location>
        <begin position="155"/>
        <end position="157"/>
    </location>
</feature>
<feature type="strand" evidence="3">
    <location>
        <begin position="161"/>
        <end position="165"/>
    </location>
</feature>
<feature type="strand" evidence="3">
    <location>
        <begin position="167"/>
        <end position="170"/>
    </location>
</feature>
<feature type="helix" evidence="3">
    <location>
        <begin position="174"/>
        <end position="185"/>
    </location>
</feature>
<feature type="strand" evidence="3">
    <location>
        <begin position="189"/>
        <end position="192"/>
    </location>
</feature>
<feature type="strand" evidence="4">
    <location>
        <begin position="198"/>
        <end position="200"/>
    </location>
</feature>
<feature type="helix" evidence="3">
    <location>
        <begin position="205"/>
        <end position="223"/>
    </location>
</feature>
<feature type="strand" evidence="3">
    <location>
        <begin position="228"/>
        <end position="232"/>
    </location>
</feature>
<feature type="helix" evidence="3">
    <location>
        <begin position="238"/>
        <end position="252"/>
    </location>
</feature>
<feature type="helix" evidence="3">
    <location>
        <begin position="253"/>
        <end position="258"/>
    </location>
</feature>
<feature type="strand" evidence="3">
    <location>
        <begin position="259"/>
        <end position="264"/>
    </location>
</feature>
<feature type="helix" evidence="3">
    <location>
        <begin position="265"/>
        <end position="268"/>
    </location>
</feature>
<feature type="helix" evidence="3">
    <location>
        <begin position="270"/>
        <end position="279"/>
    </location>
</feature>
<feature type="strand" evidence="3">
    <location>
        <begin position="283"/>
        <end position="288"/>
    </location>
</feature>
<feature type="turn" evidence="3">
    <location>
        <begin position="290"/>
        <end position="292"/>
    </location>
</feature>
<feature type="helix" evidence="3">
    <location>
        <begin position="293"/>
        <end position="296"/>
    </location>
</feature>
<feature type="strand" evidence="3">
    <location>
        <begin position="302"/>
        <end position="304"/>
    </location>
</feature>
<feature type="helix" evidence="3">
    <location>
        <begin position="306"/>
        <end position="316"/>
    </location>
</feature>
<feature type="strand" evidence="3">
    <location>
        <begin position="319"/>
        <end position="322"/>
    </location>
</feature>
<feature type="strand" evidence="3">
    <location>
        <begin position="328"/>
        <end position="332"/>
    </location>
</feature>
<feature type="helix" evidence="3">
    <location>
        <begin position="335"/>
        <end position="337"/>
    </location>
</feature>
<feature type="helix" evidence="3">
    <location>
        <begin position="338"/>
        <end position="345"/>
    </location>
</feature>
<feature type="strand" evidence="3">
    <location>
        <begin position="346"/>
        <end position="350"/>
    </location>
</feature>
<feature type="strand" evidence="3">
    <location>
        <begin position="355"/>
        <end position="357"/>
    </location>
</feature>
<feature type="strand" evidence="3">
    <location>
        <begin position="365"/>
        <end position="371"/>
    </location>
</feature>
<feature type="turn" evidence="3">
    <location>
        <begin position="374"/>
        <end position="376"/>
    </location>
</feature>
<feature type="helix" evidence="3">
    <location>
        <begin position="377"/>
        <end position="384"/>
    </location>
</feature>
<feature type="strand" evidence="3">
    <location>
        <begin position="389"/>
        <end position="392"/>
    </location>
</feature>
<feature type="helix" evidence="3">
    <location>
        <begin position="394"/>
        <end position="398"/>
    </location>
</feature>
<feature type="helix" evidence="3">
    <location>
        <begin position="404"/>
        <end position="419"/>
    </location>
</feature>
<feature type="helix" evidence="3">
    <location>
        <begin position="424"/>
        <end position="428"/>
    </location>
</feature>
<feature type="helix" evidence="3">
    <location>
        <begin position="432"/>
        <end position="440"/>
    </location>
</feature>
<feature type="helix" evidence="3">
    <location>
        <begin position="442"/>
        <end position="448"/>
    </location>
</feature>
<feature type="helix" evidence="3">
    <location>
        <begin position="450"/>
        <end position="452"/>
    </location>
</feature>
<reference key="1">
    <citation type="journal article" date="2003" name="FEMS Microbiol. Lett.">
        <title>Construction of a genetically engineered microorganism for CO2 fixation using a Rhodopseudomonas/Escherichia coli shuttle vector.</title>
        <authorList>
            <person name="Du C."/>
            <person name="Zhou J."/>
            <person name="Wang J."/>
            <person name="Yan B."/>
            <person name="Lu H."/>
            <person name="Hou H."/>
        </authorList>
    </citation>
    <scope>NUCLEOTIDE SEQUENCE [GENOMIC DNA]</scope>
    <source>
        <strain>DH</strain>
    </source>
</reference>
<reference key="2">
    <citation type="journal article" date="2004" name="Microb. Ecol.">
        <title>Analysis of diversity among 3-chlorobenzoate-degrading strains of Rhodopseudomonas palustris.</title>
        <authorList>
            <person name="Oda Y."/>
            <person name="Meijer W.G."/>
            <person name="Gibson J.L."/>
            <person name="Gottschal J.C."/>
            <person name="Forney L.J."/>
        </authorList>
    </citation>
    <scope>NUCLEOTIDE SEQUENCE [GENOMIC DNA]</scope>
    <source>
        <strain>DCP3</strain>
    </source>
</reference>
<reference key="3">
    <citation type="journal article" date="2004" name="Nat. Biotechnol.">
        <title>Complete genome sequence of the metabolically versatile photosynthetic bacterium Rhodopseudomonas palustris.</title>
        <authorList>
            <person name="Larimer F.W."/>
            <person name="Chain P."/>
            <person name="Hauser L."/>
            <person name="Lamerdin J.E."/>
            <person name="Malfatti S."/>
            <person name="Do L."/>
            <person name="Land M.L."/>
            <person name="Pelletier D.A."/>
            <person name="Beatty J.T."/>
            <person name="Lang A.S."/>
            <person name="Tabita F.R."/>
            <person name="Gibson J.L."/>
            <person name="Hanson T.E."/>
            <person name="Bobst C."/>
            <person name="Torres y Torres J.L."/>
            <person name="Peres C."/>
            <person name="Harrison F.H."/>
            <person name="Gibson J."/>
            <person name="Harwood C.S."/>
        </authorList>
    </citation>
    <scope>NUCLEOTIDE SEQUENCE [LARGE SCALE GENOMIC DNA]</scope>
    <source>
        <strain>ATCC BAA-98 / CGA009</strain>
    </source>
</reference>
<accession>Q6N0W9</accession>
<accession>Q8GJP8</accession>
<accession>Q93TJ8</accession>
<organism>
    <name type="scientific">Rhodopseudomonas palustris (strain ATCC BAA-98 / CGA009)</name>
    <dbReference type="NCBI Taxonomy" id="258594"/>
    <lineage>
        <taxon>Bacteria</taxon>
        <taxon>Pseudomonadati</taxon>
        <taxon>Pseudomonadota</taxon>
        <taxon>Alphaproteobacteria</taxon>
        <taxon>Hyphomicrobiales</taxon>
        <taxon>Nitrobacteraceae</taxon>
        <taxon>Rhodopseudomonas</taxon>
    </lineage>
</organism>
<comment type="function">
    <text evidence="1">RuBisCO catalyzes two reactions: the carboxylation of D-ribulose 1,5-bisphosphate, the primary event in carbon dioxide fixation, as well as the oxidative fragmentation of the pentose substrate. Both reactions occur simultaneously and in competition at the same active site.</text>
</comment>
<comment type="catalytic activity">
    <reaction evidence="1">
        <text>2 (2R)-3-phosphoglycerate + 2 H(+) = D-ribulose 1,5-bisphosphate + CO2 + H2O</text>
        <dbReference type="Rhea" id="RHEA:23124"/>
        <dbReference type="ChEBI" id="CHEBI:15377"/>
        <dbReference type="ChEBI" id="CHEBI:15378"/>
        <dbReference type="ChEBI" id="CHEBI:16526"/>
        <dbReference type="ChEBI" id="CHEBI:57870"/>
        <dbReference type="ChEBI" id="CHEBI:58272"/>
        <dbReference type="EC" id="4.1.1.39"/>
    </reaction>
</comment>
<comment type="catalytic activity">
    <reaction evidence="1">
        <text>D-ribulose 1,5-bisphosphate + O2 = 2-phosphoglycolate + (2R)-3-phosphoglycerate + 2 H(+)</text>
        <dbReference type="Rhea" id="RHEA:36631"/>
        <dbReference type="ChEBI" id="CHEBI:15378"/>
        <dbReference type="ChEBI" id="CHEBI:15379"/>
        <dbReference type="ChEBI" id="CHEBI:57870"/>
        <dbReference type="ChEBI" id="CHEBI:58033"/>
        <dbReference type="ChEBI" id="CHEBI:58272"/>
    </reaction>
</comment>
<comment type="cofactor">
    <cofactor evidence="1">
        <name>Mg(2+)</name>
        <dbReference type="ChEBI" id="CHEBI:18420"/>
    </cofactor>
    <text evidence="1">Binds 1 Mg(2+) ion per subunit.</text>
</comment>
<comment type="subunit">
    <text evidence="1">Homodimer.</text>
</comment>
<comment type="miscellaneous">
    <text evidence="1">The basic functional RuBisCO is composed of a large chain homodimer in a 'head-to-tail' conformation. In contrast to form I RuBisCO, the form II RuBisCO are composed solely of large subunits.</text>
</comment>
<comment type="similarity">
    <text evidence="1">Belongs to the RuBisCO large chain family. Type II subfamily.</text>
</comment>
<evidence type="ECO:0000255" key="1">
    <source>
        <dbReference type="HAMAP-Rule" id="MF_01339"/>
    </source>
</evidence>
<evidence type="ECO:0000305" key="2"/>
<evidence type="ECO:0007829" key="3">
    <source>
        <dbReference type="PDB" id="5HJX"/>
    </source>
</evidence>
<evidence type="ECO:0007829" key="4">
    <source>
        <dbReference type="PDB" id="5HQM"/>
    </source>
</evidence>
<name>RBL2_RHOPA</name>
<proteinExistence type="evidence at protein level"/>
<gene>
    <name evidence="1" type="primary">cbbM</name>
    <name type="ordered locus">RPA4641</name>
</gene>
<sequence>MDQSNRYANLNLKESELIAGGRHVLCAYIMKPKAGFGNFIQTAAHFAAESSTGTNVEVSTTDDFTRGVDALVYEVDEANSLMKIAYPIELFDRNVIDGRAMIASFLTLTIGNNQGMGDVEYAKMYDFYVPPAYLKLFDGPSTTIKDLWRVLGRPVINGGFIVGTIIKPKLGLRPQPFANACYDFWLGGDFIKNDEPQGNQVFAPFKDTVRAVADAMRRAQDKTGEAKLFSFNITADDHYEMLARGEFILETFADNADHIAFLVDGYVAGPAAVTTARRAFPKQYLHYHRAGHGAVTSPQSKRGYTAFVLSKMARLQGASGIHTGTMGFGKMEGEAADRAIAYMITEDAADGPYFHQEWLGMNPTTPIISGGMNALRMPGFFDNLGHSNLIMTAGGGAFGHVDGGAAGAKSLRQAEQCWKQGADPVEFAKDHREFARAFESFPQDADKLYPNWRAKLKPQAA</sequence>